<accession>A0AHH1</accession>
<proteinExistence type="inferred from homology"/>
<sequence length="90" mass="10445">MEYSYPLNPDWTTEEMTIVVQFLEAIERAYEKGIDTVELKDKYKEFKQVVPAKGEEKRIGIDFEKASGYSAYKVMQLVKNATTSKIKMQP</sequence>
<gene>
    <name type="ordered locus">lwe1035</name>
</gene>
<reference key="1">
    <citation type="journal article" date="2006" name="J. Bacteriol.">
        <title>Whole-genome sequence of Listeria welshimeri reveals common steps in genome reduction with Listeria innocua as compared to Listeria monocytogenes.</title>
        <authorList>
            <person name="Hain T."/>
            <person name="Steinweg C."/>
            <person name="Kuenne C.T."/>
            <person name="Billion A."/>
            <person name="Ghai R."/>
            <person name="Chatterjee S.S."/>
            <person name="Domann E."/>
            <person name="Kaerst U."/>
            <person name="Goesmann A."/>
            <person name="Bekel T."/>
            <person name="Bartels D."/>
            <person name="Kaiser O."/>
            <person name="Meyer F."/>
            <person name="Puehler A."/>
            <person name="Weisshaar B."/>
            <person name="Wehland J."/>
            <person name="Liang C."/>
            <person name="Dandekar T."/>
            <person name="Lampidis R."/>
            <person name="Kreft J."/>
            <person name="Goebel W."/>
            <person name="Chakraborty T."/>
        </authorList>
    </citation>
    <scope>NUCLEOTIDE SEQUENCE [LARGE SCALE GENOMIC DNA]</scope>
    <source>
        <strain>ATCC 35897 / DSM 20650 / CCUG 15529 / CIP 8149 / NCTC 11857 / SLCC 5334 / V8</strain>
    </source>
</reference>
<protein>
    <recommendedName>
        <fullName evidence="1">UPF0223 protein lwe1035</fullName>
    </recommendedName>
</protein>
<evidence type="ECO:0000255" key="1">
    <source>
        <dbReference type="HAMAP-Rule" id="MF_01041"/>
    </source>
</evidence>
<name>Y1035_LISW6</name>
<organism>
    <name type="scientific">Listeria welshimeri serovar 6b (strain ATCC 35897 / DSM 20650 / CCUG 15529 / CIP 8149 / NCTC 11857 / SLCC 5334 / V8)</name>
    <dbReference type="NCBI Taxonomy" id="386043"/>
    <lineage>
        <taxon>Bacteria</taxon>
        <taxon>Bacillati</taxon>
        <taxon>Bacillota</taxon>
        <taxon>Bacilli</taxon>
        <taxon>Bacillales</taxon>
        <taxon>Listeriaceae</taxon>
        <taxon>Listeria</taxon>
    </lineage>
</organism>
<feature type="chain" id="PRO_1000064143" description="UPF0223 protein lwe1035">
    <location>
        <begin position="1"/>
        <end position="90"/>
    </location>
</feature>
<comment type="similarity">
    <text evidence="1">Belongs to the UPF0223 family.</text>
</comment>
<dbReference type="EMBL" id="AM263198">
    <property type="protein sequence ID" value="CAK20453.1"/>
    <property type="molecule type" value="Genomic_DNA"/>
</dbReference>
<dbReference type="RefSeq" id="WP_011701858.1">
    <property type="nucleotide sequence ID" value="NC_008555.1"/>
</dbReference>
<dbReference type="SMR" id="A0AHH1"/>
<dbReference type="STRING" id="386043.lwe1035"/>
<dbReference type="GeneID" id="61188924"/>
<dbReference type="KEGG" id="lwe:lwe1035"/>
<dbReference type="eggNOG" id="COG4476">
    <property type="taxonomic scope" value="Bacteria"/>
</dbReference>
<dbReference type="HOGENOM" id="CLU_166693_1_0_9"/>
<dbReference type="OrthoDB" id="1649074at2"/>
<dbReference type="Proteomes" id="UP000000779">
    <property type="component" value="Chromosome"/>
</dbReference>
<dbReference type="Gene3D" id="1.10.220.80">
    <property type="entry name" value="BH2638-like"/>
    <property type="match status" value="1"/>
</dbReference>
<dbReference type="HAMAP" id="MF_01041">
    <property type="entry name" value="UPF0223"/>
    <property type="match status" value="1"/>
</dbReference>
<dbReference type="InterPro" id="IPR023324">
    <property type="entry name" value="BH2638-like_sf"/>
</dbReference>
<dbReference type="InterPro" id="IPR007920">
    <property type="entry name" value="UPF0223"/>
</dbReference>
<dbReference type="NCBIfam" id="NF003353">
    <property type="entry name" value="PRK04387.1"/>
    <property type="match status" value="1"/>
</dbReference>
<dbReference type="Pfam" id="PF05256">
    <property type="entry name" value="UPF0223"/>
    <property type="match status" value="1"/>
</dbReference>
<dbReference type="PIRSF" id="PIRSF037260">
    <property type="entry name" value="UPF0223"/>
    <property type="match status" value="1"/>
</dbReference>
<dbReference type="SUPFAM" id="SSF158504">
    <property type="entry name" value="BH2638-like"/>
    <property type="match status" value="1"/>
</dbReference>